<gene>
    <name type="primary">POB3</name>
    <name type="ordered locus">YALI0D25058g</name>
</gene>
<reference key="1">
    <citation type="journal article" date="2004" name="Nature">
        <title>Genome evolution in yeasts.</title>
        <authorList>
            <person name="Dujon B."/>
            <person name="Sherman D."/>
            <person name="Fischer G."/>
            <person name="Durrens P."/>
            <person name="Casaregola S."/>
            <person name="Lafontaine I."/>
            <person name="de Montigny J."/>
            <person name="Marck C."/>
            <person name="Neuveglise C."/>
            <person name="Talla E."/>
            <person name="Goffard N."/>
            <person name="Frangeul L."/>
            <person name="Aigle M."/>
            <person name="Anthouard V."/>
            <person name="Babour A."/>
            <person name="Barbe V."/>
            <person name="Barnay S."/>
            <person name="Blanchin S."/>
            <person name="Beckerich J.-M."/>
            <person name="Beyne E."/>
            <person name="Bleykasten C."/>
            <person name="Boisrame A."/>
            <person name="Boyer J."/>
            <person name="Cattolico L."/>
            <person name="Confanioleri F."/>
            <person name="de Daruvar A."/>
            <person name="Despons L."/>
            <person name="Fabre E."/>
            <person name="Fairhead C."/>
            <person name="Ferry-Dumazet H."/>
            <person name="Groppi A."/>
            <person name="Hantraye F."/>
            <person name="Hennequin C."/>
            <person name="Jauniaux N."/>
            <person name="Joyet P."/>
            <person name="Kachouri R."/>
            <person name="Kerrest A."/>
            <person name="Koszul R."/>
            <person name="Lemaire M."/>
            <person name="Lesur I."/>
            <person name="Ma L."/>
            <person name="Muller H."/>
            <person name="Nicaud J.-M."/>
            <person name="Nikolski M."/>
            <person name="Oztas S."/>
            <person name="Ozier-Kalogeropoulos O."/>
            <person name="Pellenz S."/>
            <person name="Potier S."/>
            <person name="Richard G.-F."/>
            <person name="Straub M.-L."/>
            <person name="Suleau A."/>
            <person name="Swennen D."/>
            <person name="Tekaia F."/>
            <person name="Wesolowski-Louvel M."/>
            <person name="Westhof E."/>
            <person name="Wirth B."/>
            <person name="Zeniou-Meyer M."/>
            <person name="Zivanovic Y."/>
            <person name="Bolotin-Fukuhara M."/>
            <person name="Thierry A."/>
            <person name="Bouchier C."/>
            <person name="Caudron B."/>
            <person name="Scarpelli C."/>
            <person name="Gaillardin C."/>
            <person name="Weissenbach J."/>
            <person name="Wincker P."/>
            <person name="Souciet J.-L."/>
        </authorList>
    </citation>
    <scope>NUCLEOTIDE SEQUENCE [LARGE SCALE GENOMIC DNA]</scope>
    <source>
        <strain>CLIB 122 / E 150</strain>
    </source>
</reference>
<name>POB3_YARLI</name>
<accession>Q6C7V4</accession>
<feature type="chain" id="PRO_0000245212" description="FACT complex subunit POB3">
    <location>
        <begin position="1"/>
        <end position="544"/>
    </location>
</feature>
<feature type="region of interest" description="Disordered" evidence="2">
    <location>
        <begin position="182"/>
        <end position="219"/>
    </location>
</feature>
<feature type="region of interest" description="Disordered" evidence="2">
    <location>
        <begin position="490"/>
        <end position="544"/>
    </location>
</feature>
<feature type="compositionally biased region" description="Basic and acidic residues" evidence="2">
    <location>
        <begin position="188"/>
        <end position="203"/>
    </location>
</feature>
<feature type="compositionally biased region" description="Acidic residues" evidence="2">
    <location>
        <begin position="204"/>
        <end position="219"/>
    </location>
</feature>
<feature type="compositionally biased region" description="Acidic residues" evidence="2">
    <location>
        <begin position="523"/>
        <end position="544"/>
    </location>
</feature>
<sequence length="544" mass="60958">MSTTEFDGIYLNQSKAHGRLRMVETGLGWKAVQKTSMGGSKETKKDEPFLLGKEELLAAFWSRGSRGFEMKIQTKNRGAANFDGFEQDNLEELKNVMKRNYGISVEQREHSVKGWNWGKTDFERSELVFSVANKPAFEIPYAEVANSNLVGKNEVALEFQQPADGRAGDELVEMRFYVPGVTSVEGDENPKKKQKTEKEGEEGKEGDDDADADDESEEEVQSTAQIFYDTLKEKADIGAVAGTAVVSLSEIYLVIPRGRYDIDMYANFMRLRGKTYDYMVQYKHVQRLIVLPKPDDLHNILVVQLDPPLRQGQTRYPFLVMQFLREAEIKVELNVDDAEFAEKYADKGLKQSYDESAHQVVGSIFRGLTGRKLTVPGSFKTVHGHAGVSCSLKASEGHLYPLERNFLFLSKPVFIPFAEIQDITLSRVGSSVTTSRTFDMTLKLRNAQGEYQFSNISKEEQEGLEAFIKSKGIRLKNDLAEEKALLAATLAEVDDDSDDGGEFRGSADEDDESPDEDFHAESDSEVAEEFDSNAESSSGEEDDE</sequence>
<organism>
    <name type="scientific">Yarrowia lipolytica (strain CLIB 122 / E 150)</name>
    <name type="common">Yeast</name>
    <name type="synonym">Candida lipolytica</name>
    <dbReference type="NCBI Taxonomy" id="284591"/>
    <lineage>
        <taxon>Eukaryota</taxon>
        <taxon>Fungi</taxon>
        <taxon>Dikarya</taxon>
        <taxon>Ascomycota</taxon>
        <taxon>Saccharomycotina</taxon>
        <taxon>Dipodascomycetes</taxon>
        <taxon>Dipodascales</taxon>
        <taxon>Dipodascales incertae sedis</taxon>
        <taxon>Yarrowia</taxon>
    </lineage>
</organism>
<evidence type="ECO:0000250" key="1"/>
<evidence type="ECO:0000256" key="2">
    <source>
        <dbReference type="SAM" id="MobiDB-lite"/>
    </source>
</evidence>
<evidence type="ECO:0000305" key="3"/>
<dbReference type="EMBL" id="CR382130">
    <property type="protein sequence ID" value="CAG81462.1"/>
    <property type="molecule type" value="Genomic_DNA"/>
</dbReference>
<dbReference type="RefSeq" id="XP_503258.1">
    <property type="nucleotide sequence ID" value="XM_503258.1"/>
</dbReference>
<dbReference type="SMR" id="Q6C7V4"/>
<dbReference type="FunCoup" id="Q6C7V4">
    <property type="interactions" value="1061"/>
</dbReference>
<dbReference type="STRING" id="284591.Q6C7V4"/>
<dbReference type="EnsemblFungi" id="CAG81462">
    <property type="protein sequence ID" value="CAG81462"/>
    <property type="gene ID" value="YALI0_D25058g"/>
</dbReference>
<dbReference type="KEGG" id="yli:2910851"/>
<dbReference type="VEuPathDB" id="FungiDB:YALI0_D25058g"/>
<dbReference type="HOGENOM" id="CLU_017374_3_0_1"/>
<dbReference type="InParanoid" id="Q6C7V4"/>
<dbReference type="OMA" id="QVVTKIF"/>
<dbReference type="OrthoDB" id="114307at4891"/>
<dbReference type="Proteomes" id="UP000001300">
    <property type="component" value="Chromosome D"/>
</dbReference>
<dbReference type="GO" id="GO:0000781">
    <property type="term" value="C:chromosome, telomeric region"/>
    <property type="evidence" value="ECO:0007669"/>
    <property type="project" value="GOC"/>
</dbReference>
<dbReference type="GO" id="GO:0035101">
    <property type="term" value="C:FACT complex"/>
    <property type="evidence" value="ECO:0000318"/>
    <property type="project" value="GO_Central"/>
</dbReference>
<dbReference type="GO" id="GO:0003677">
    <property type="term" value="F:DNA binding"/>
    <property type="evidence" value="ECO:0007669"/>
    <property type="project" value="InterPro"/>
</dbReference>
<dbReference type="GO" id="GO:0042393">
    <property type="term" value="F:histone binding"/>
    <property type="evidence" value="ECO:0000318"/>
    <property type="project" value="GO_Central"/>
</dbReference>
<dbReference type="GO" id="GO:0031491">
    <property type="term" value="F:nucleosome binding"/>
    <property type="evidence" value="ECO:0000318"/>
    <property type="project" value="GO_Central"/>
</dbReference>
<dbReference type="GO" id="GO:0006281">
    <property type="term" value="P:DNA repair"/>
    <property type="evidence" value="ECO:0007669"/>
    <property type="project" value="UniProtKB-KW"/>
</dbReference>
<dbReference type="GO" id="GO:0006335">
    <property type="term" value="P:DNA replication-dependent chromatin assembly"/>
    <property type="evidence" value="ECO:0007669"/>
    <property type="project" value="EnsemblFungi"/>
</dbReference>
<dbReference type="GO" id="GO:0006261">
    <property type="term" value="P:DNA-templated DNA replication"/>
    <property type="evidence" value="ECO:0007669"/>
    <property type="project" value="EnsemblFungi"/>
</dbReference>
<dbReference type="GO" id="GO:0034728">
    <property type="term" value="P:nucleosome organization"/>
    <property type="evidence" value="ECO:0007669"/>
    <property type="project" value="EnsemblFungi"/>
</dbReference>
<dbReference type="GO" id="GO:0031508">
    <property type="term" value="P:pericentric heterochromatin formation"/>
    <property type="evidence" value="ECO:0007669"/>
    <property type="project" value="EnsemblFungi"/>
</dbReference>
<dbReference type="GO" id="GO:0045899">
    <property type="term" value="P:positive regulation of RNA polymerase II transcription preinitiation complex assembly"/>
    <property type="evidence" value="ECO:0007669"/>
    <property type="project" value="EnsemblFungi"/>
</dbReference>
<dbReference type="GO" id="GO:0030466">
    <property type="term" value="P:silent mating-type cassette heterochromatin formation"/>
    <property type="evidence" value="ECO:0007669"/>
    <property type="project" value="EnsemblFungi"/>
</dbReference>
<dbReference type="GO" id="GO:0031509">
    <property type="term" value="P:subtelomeric heterochromatin formation"/>
    <property type="evidence" value="ECO:0007669"/>
    <property type="project" value="EnsemblFungi"/>
</dbReference>
<dbReference type="CDD" id="cd13230">
    <property type="entry name" value="PH1_SSRP1-like"/>
    <property type="match status" value="1"/>
</dbReference>
<dbReference type="CDD" id="cd13231">
    <property type="entry name" value="PH2_SSRP1-like"/>
    <property type="match status" value="1"/>
</dbReference>
<dbReference type="CDD" id="cd13229">
    <property type="entry name" value="PH_TFIIH"/>
    <property type="match status" value="1"/>
</dbReference>
<dbReference type="FunFam" id="2.30.29.150:FF:000001">
    <property type="entry name" value="Fact complex subunit ssrp1"/>
    <property type="match status" value="1"/>
</dbReference>
<dbReference type="FunFam" id="2.30.29.30:FF:000098">
    <property type="entry name" value="Fact complex subunit ssrp1"/>
    <property type="match status" value="1"/>
</dbReference>
<dbReference type="Gene3D" id="2.30.29.150">
    <property type="match status" value="1"/>
</dbReference>
<dbReference type="Gene3D" id="2.30.29.30">
    <property type="entry name" value="Pleckstrin-homology domain (PH domain)/Phosphotyrosine-binding domain (PTB)"/>
    <property type="match status" value="2"/>
</dbReference>
<dbReference type="Gene3D" id="2.30.29.220">
    <property type="entry name" value="Structure-specific recognition protein (SSRP1)"/>
    <property type="match status" value="1"/>
</dbReference>
<dbReference type="InterPro" id="IPR011993">
    <property type="entry name" value="PH-like_dom_sf"/>
</dbReference>
<dbReference type="InterPro" id="IPR013719">
    <property type="entry name" value="RTT106/SPT16-like_middle_dom"/>
</dbReference>
<dbReference type="InterPro" id="IPR050454">
    <property type="entry name" value="RTT106/SSRP1_HistChap/FACT"/>
</dbReference>
<dbReference type="InterPro" id="IPR048993">
    <property type="entry name" value="SSRP1-like_PH1"/>
</dbReference>
<dbReference type="InterPro" id="IPR000969">
    <property type="entry name" value="SSRP1/POB3"/>
</dbReference>
<dbReference type="InterPro" id="IPR035417">
    <property type="entry name" value="SSRP1/POB3_N"/>
</dbReference>
<dbReference type="InterPro" id="IPR024954">
    <property type="entry name" value="SSRP1_DD"/>
</dbReference>
<dbReference type="InterPro" id="IPR038167">
    <property type="entry name" value="SSRP1_sf"/>
</dbReference>
<dbReference type="PANTHER" id="PTHR45849">
    <property type="entry name" value="FACT COMPLEX SUBUNIT SSRP1"/>
    <property type="match status" value="1"/>
</dbReference>
<dbReference type="PANTHER" id="PTHR45849:SF1">
    <property type="entry name" value="FACT COMPLEX SUBUNIT SSRP1"/>
    <property type="match status" value="1"/>
</dbReference>
<dbReference type="Pfam" id="PF21103">
    <property type="entry name" value="PH1_SSRP1-like"/>
    <property type="match status" value="1"/>
</dbReference>
<dbReference type="Pfam" id="PF17292">
    <property type="entry name" value="POB3_N"/>
    <property type="match status" value="1"/>
</dbReference>
<dbReference type="Pfam" id="PF08512">
    <property type="entry name" value="Rttp106-like_middle"/>
    <property type="match status" value="1"/>
</dbReference>
<dbReference type="Pfam" id="PF03531">
    <property type="entry name" value="SSrecog"/>
    <property type="match status" value="1"/>
</dbReference>
<dbReference type="PRINTS" id="PR00887">
    <property type="entry name" value="SSRCOGNITION"/>
</dbReference>
<dbReference type="SMART" id="SM01287">
    <property type="entry name" value="Rtt106"/>
    <property type="match status" value="1"/>
</dbReference>
<dbReference type="SUPFAM" id="SSF50729">
    <property type="entry name" value="PH domain-like"/>
    <property type="match status" value="1"/>
</dbReference>
<protein>
    <recommendedName>
        <fullName>FACT complex subunit POB3</fullName>
    </recommendedName>
    <alternativeName>
        <fullName>Facilitates chromatin transcription complex subunit POB3</fullName>
    </alternativeName>
</protein>
<proteinExistence type="inferred from homology"/>
<comment type="function">
    <text evidence="1">Component of the FACT complex, a general chromatin factor that acts to reorganize nucleosomes. The FACT complex is involved in multiple processes that require DNA as a template such as mRNA elongation, DNA replication and DNA repair. During transcription elongation the FACT complex acts as a histone chaperone that both destabilizes and restores nucleosomal structure. It facilitates the passage of RNA polymerase II and transcription by promoting the dissociation of one histone H2A-H2B dimer from the nucleosome, then subsequently promotes the reestablishment of the nucleosome following the passage of RNA polymerase II (By similarity).</text>
</comment>
<comment type="subunit">
    <text evidence="1">Forms a stable heterodimer with SPT16. The SPT16-POB3 dimer weakly associates with multiple molecules of NHP6 to form the FACT complex (By similarity).</text>
</comment>
<comment type="subcellular location">
    <subcellularLocation>
        <location evidence="1">Nucleus</location>
    </subcellularLocation>
    <subcellularLocation>
        <location evidence="1">Chromosome</location>
    </subcellularLocation>
</comment>
<comment type="miscellaneous">
    <text>In contrast to the orthologous protein in animals and plants, this protein does not contain a HMG box DNA-binding domain. This function may instead be provided by the HMG box of the associated NHP6 protein in the FACT complex of fungi.</text>
</comment>
<comment type="similarity">
    <text evidence="3">Belongs to the SSRP1 family.</text>
</comment>
<keyword id="KW-0158">Chromosome</keyword>
<keyword id="KW-0227">DNA damage</keyword>
<keyword id="KW-0234">DNA repair</keyword>
<keyword id="KW-0235">DNA replication</keyword>
<keyword id="KW-0539">Nucleus</keyword>
<keyword id="KW-1185">Reference proteome</keyword>
<keyword id="KW-0804">Transcription</keyword>
<keyword id="KW-0805">Transcription regulation</keyword>